<proteinExistence type="inferred from homology"/>
<comment type="function">
    <text evidence="1">One of the primary rRNA binding proteins, this protein initially binds near the 5'-end of the 23S rRNA. It is important during the early stages of 50S assembly. It makes multiple contacts with different domains of the 23S rRNA in the assembled 50S subunit and ribosome.</text>
</comment>
<comment type="function">
    <text evidence="1">Forms part of the polypeptide exit tunnel.</text>
</comment>
<comment type="subunit">
    <text evidence="1">Part of the 50S ribosomal subunit.</text>
</comment>
<comment type="similarity">
    <text evidence="1">Belongs to the universal ribosomal protein uL4 family.</text>
</comment>
<organism>
    <name type="scientific">Anaeromyxobacter sp. (strain K)</name>
    <dbReference type="NCBI Taxonomy" id="447217"/>
    <lineage>
        <taxon>Bacteria</taxon>
        <taxon>Pseudomonadati</taxon>
        <taxon>Myxococcota</taxon>
        <taxon>Myxococcia</taxon>
        <taxon>Myxococcales</taxon>
        <taxon>Cystobacterineae</taxon>
        <taxon>Anaeromyxobacteraceae</taxon>
        <taxon>Anaeromyxobacter</taxon>
    </lineage>
</organism>
<reference key="1">
    <citation type="submission" date="2008-08" db="EMBL/GenBank/DDBJ databases">
        <title>Complete sequence of Anaeromyxobacter sp. K.</title>
        <authorList>
            <consortium name="US DOE Joint Genome Institute"/>
            <person name="Lucas S."/>
            <person name="Copeland A."/>
            <person name="Lapidus A."/>
            <person name="Glavina del Rio T."/>
            <person name="Dalin E."/>
            <person name="Tice H."/>
            <person name="Bruce D."/>
            <person name="Goodwin L."/>
            <person name="Pitluck S."/>
            <person name="Saunders E."/>
            <person name="Brettin T."/>
            <person name="Detter J.C."/>
            <person name="Han C."/>
            <person name="Larimer F."/>
            <person name="Land M."/>
            <person name="Hauser L."/>
            <person name="Kyrpides N."/>
            <person name="Ovchinnikiva G."/>
            <person name="Beliaev A."/>
        </authorList>
    </citation>
    <scope>NUCLEOTIDE SEQUENCE [LARGE SCALE GENOMIC DNA]</scope>
    <source>
        <strain>K</strain>
    </source>
</reference>
<feature type="chain" id="PRO_1000142073" description="Large ribosomal subunit protein uL4">
    <location>
        <begin position="1"/>
        <end position="206"/>
    </location>
</feature>
<feature type="region of interest" description="Disordered" evidence="2">
    <location>
        <begin position="48"/>
        <end position="97"/>
    </location>
</feature>
<feature type="compositionally biased region" description="Basic residues" evidence="2">
    <location>
        <begin position="63"/>
        <end position="72"/>
    </location>
</feature>
<dbReference type="EMBL" id="CP001131">
    <property type="protein sequence ID" value="ACG73162.1"/>
    <property type="molecule type" value="Genomic_DNA"/>
</dbReference>
<dbReference type="RefSeq" id="WP_012525974.1">
    <property type="nucleotide sequence ID" value="NC_011145.1"/>
</dbReference>
<dbReference type="SMR" id="B4UBA0"/>
<dbReference type="KEGG" id="ank:AnaeK_1934"/>
<dbReference type="HOGENOM" id="CLU_041575_5_2_7"/>
<dbReference type="OrthoDB" id="9803201at2"/>
<dbReference type="Proteomes" id="UP000001871">
    <property type="component" value="Chromosome"/>
</dbReference>
<dbReference type="GO" id="GO:1990904">
    <property type="term" value="C:ribonucleoprotein complex"/>
    <property type="evidence" value="ECO:0007669"/>
    <property type="project" value="UniProtKB-KW"/>
</dbReference>
<dbReference type="GO" id="GO:0005840">
    <property type="term" value="C:ribosome"/>
    <property type="evidence" value="ECO:0007669"/>
    <property type="project" value="UniProtKB-KW"/>
</dbReference>
<dbReference type="GO" id="GO:0019843">
    <property type="term" value="F:rRNA binding"/>
    <property type="evidence" value="ECO:0007669"/>
    <property type="project" value="UniProtKB-UniRule"/>
</dbReference>
<dbReference type="GO" id="GO:0003735">
    <property type="term" value="F:structural constituent of ribosome"/>
    <property type="evidence" value="ECO:0007669"/>
    <property type="project" value="InterPro"/>
</dbReference>
<dbReference type="GO" id="GO:0006412">
    <property type="term" value="P:translation"/>
    <property type="evidence" value="ECO:0007669"/>
    <property type="project" value="UniProtKB-UniRule"/>
</dbReference>
<dbReference type="Gene3D" id="3.40.1370.10">
    <property type="match status" value="1"/>
</dbReference>
<dbReference type="HAMAP" id="MF_01328_B">
    <property type="entry name" value="Ribosomal_uL4_B"/>
    <property type="match status" value="1"/>
</dbReference>
<dbReference type="InterPro" id="IPR002136">
    <property type="entry name" value="Ribosomal_uL4"/>
</dbReference>
<dbReference type="InterPro" id="IPR013005">
    <property type="entry name" value="Ribosomal_uL4-like"/>
</dbReference>
<dbReference type="InterPro" id="IPR023574">
    <property type="entry name" value="Ribosomal_uL4_dom_sf"/>
</dbReference>
<dbReference type="NCBIfam" id="TIGR03953">
    <property type="entry name" value="rplD_bact"/>
    <property type="match status" value="1"/>
</dbReference>
<dbReference type="PANTHER" id="PTHR10746">
    <property type="entry name" value="50S RIBOSOMAL PROTEIN L4"/>
    <property type="match status" value="1"/>
</dbReference>
<dbReference type="PANTHER" id="PTHR10746:SF6">
    <property type="entry name" value="LARGE RIBOSOMAL SUBUNIT PROTEIN UL4M"/>
    <property type="match status" value="1"/>
</dbReference>
<dbReference type="Pfam" id="PF00573">
    <property type="entry name" value="Ribosomal_L4"/>
    <property type="match status" value="1"/>
</dbReference>
<dbReference type="SUPFAM" id="SSF52166">
    <property type="entry name" value="Ribosomal protein L4"/>
    <property type="match status" value="1"/>
</dbReference>
<keyword id="KW-0687">Ribonucleoprotein</keyword>
<keyword id="KW-0689">Ribosomal protein</keyword>
<keyword id="KW-0694">RNA-binding</keyword>
<keyword id="KW-0699">rRNA-binding</keyword>
<gene>
    <name evidence="1" type="primary">rplD</name>
    <name type="ordered locus">AnaeK_1934</name>
</gene>
<sequence length="206" mass="22092">MAKFDVYDLSKKKVGELDLADAVFAGEVNEHLFYEVVKAKLASDRSGTHAVKNRSLVSGGGKKPWKQKHTGRARQGSTRASQWVGGGKAMGPKPRDYSYDVPKKVRKAALRSALALRSKDQKLVIVQEWKPGAPKTAAAAKVLAALGAKKALVVDDAANLALAKSVRNLDGSDFLAVEGLNVYDILRHDALVLTADTAKKLEASLS</sequence>
<accession>B4UBA0</accession>
<evidence type="ECO:0000255" key="1">
    <source>
        <dbReference type="HAMAP-Rule" id="MF_01328"/>
    </source>
</evidence>
<evidence type="ECO:0000256" key="2">
    <source>
        <dbReference type="SAM" id="MobiDB-lite"/>
    </source>
</evidence>
<evidence type="ECO:0000305" key="3"/>
<name>RL4_ANASK</name>
<protein>
    <recommendedName>
        <fullName evidence="1">Large ribosomal subunit protein uL4</fullName>
    </recommendedName>
    <alternativeName>
        <fullName evidence="3">50S ribosomal protein L4</fullName>
    </alternativeName>
</protein>